<keyword id="KW-0963">Cytoplasm</keyword>
<keyword id="KW-0328">Glycosyltransferase</keyword>
<keyword id="KW-0660">Purine salvage</keyword>
<keyword id="KW-0808">Transferase</keyword>
<accession>Q730C4</accession>
<comment type="function">
    <text evidence="1">Catalyzes a salvage reaction resulting in the formation of AMP, that is energically less costly than de novo synthesis.</text>
</comment>
<comment type="catalytic activity">
    <reaction evidence="1">
        <text>AMP + diphosphate = 5-phospho-alpha-D-ribose 1-diphosphate + adenine</text>
        <dbReference type="Rhea" id="RHEA:16609"/>
        <dbReference type="ChEBI" id="CHEBI:16708"/>
        <dbReference type="ChEBI" id="CHEBI:33019"/>
        <dbReference type="ChEBI" id="CHEBI:58017"/>
        <dbReference type="ChEBI" id="CHEBI:456215"/>
        <dbReference type="EC" id="2.4.2.7"/>
    </reaction>
</comment>
<comment type="pathway">
    <text evidence="1">Purine metabolism; AMP biosynthesis via salvage pathway; AMP from adenine: step 1/1.</text>
</comment>
<comment type="subunit">
    <text evidence="1">Homodimer.</text>
</comment>
<comment type="subcellular location">
    <subcellularLocation>
        <location evidence="1">Cytoplasm</location>
    </subcellularLocation>
</comment>
<comment type="similarity">
    <text evidence="1">Belongs to the purine/pyrimidine phosphoribosyltransferase family.</text>
</comment>
<proteinExistence type="inferred from homology"/>
<evidence type="ECO:0000255" key="1">
    <source>
        <dbReference type="HAMAP-Rule" id="MF_00004"/>
    </source>
</evidence>
<name>APT_BACC1</name>
<gene>
    <name evidence="1" type="primary">apt</name>
    <name type="ordered locus">BCE_4492</name>
</gene>
<feature type="chain" id="PRO_0000149346" description="Adenine phosphoribosyltransferase">
    <location>
        <begin position="1"/>
        <end position="170"/>
    </location>
</feature>
<organism>
    <name type="scientific">Bacillus cereus (strain ATCC 10987 / NRS 248)</name>
    <dbReference type="NCBI Taxonomy" id="222523"/>
    <lineage>
        <taxon>Bacteria</taxon>
        <taxon>Bacillati</taxon>
        <taxon>Bacillota</taxon>
        <taxon>Bacilli</taxon>
        <taxon>Bacillales</taxon>
        <taxon>Bacillaceae</taxon>
        <taxon>Bacillus</taxon>
        <taxon>Bacillus cereus group</taxon>
    </lineage>
</organism>
<sequence>MDFKQHIAIVPDYPKEGIVFKDITPLMNDGKAYKAATDAIVEYAKERDIDLVVGPEARGFIIGCPVSYALEVGFAPVRKLGKLPREVITVDYGKEYGKDVLTIHKDAIKPGQRVLITDDLLATGGTIEATIKLVEELGGVVAGIAFLVELTYLDGRKMLDGYDVLVLEKY</sequence>
<protein>
    <recommendedName>
        <fullName evidence="1">Adenine phosphoribosyltransferase</fullName>
        <shortName evidence="1">APRT</shortName>
        <ecNumber evidence="1">2.4.2.7</ecNumber>
    </recommendedName>
</protein>
<reference key="1">
    <citation type="journal article" date="2004" name="Nucleic Acids Res.">
        <title>The genome sequence of Bacillus cereus ATCC 10987 reveals metabolic adaptations and a large plasmid related to Bacillus anthracis pXO1.</title>
        <authorList>
            <person name="Rasko D.A."/>
            <person name="Ravel J."/>
            <person name="Oekstad O.A."/>
            <person name="Helgason E."/>
            <person name="Cer R.Z."/>
            <person name="Jiang L."/>
            <person name="Shores K.A."/>
            <person name="Fouts D.E."/>
            <person name="Tourasse N.J."/>
            <person name="Angiuoli S.V."/>
            <person name="Kolonay J.F."/>
            <person name="Nelson W.C."/>
            <person name="Kolstoe A.-B."/>
            <person name="Fraser C.M."/>
            <person name="Read T.D."/>
        </authorList>
    </citation>
    <scope>NUCLEOTIDE SEQUENCE [LARGE SCALE GENOMIC DNA]</scope>
    <source>
        <strain>ATCC 10987 / NRS 248</strain>
    </source>
</reference>
<dbReference type="EC" id="2.4.2.7" evidence="1"/>
<dbReference type="EMBL" id="AE017194">
    <property type="protein sequence ID" value="AAS43393.1"/>
    <property type="molecule type" value="Genomic_DNA"/>
</dbReference>
<dbReference type="SMR" id="Q730C4"/>
<dbReference type="KEGG" id="bca:BCE_4492"/>
<dbReference type="HOGENOM" id="CLU_063339_3_0_9"/>
<dbReference type="UniPathway" id="UPA00588">
    <property type="reaction ID" value="UER00646"/>
</dbReference>
<dbReference type="Proteomes" id="UP000002527">
    <property type="component" value="Chromosome"/>
</dbReference>
<dbReference type="GO" id="GO:0005737">
    <property type="term" value="C:cytoplasm"/>
    <property type="evidence" value="ECO:0007669"/>
    <property type="project" value="UniProtKB-SubCell"/>
</dbReference>
<dbReference type="GO" id="GO:0002055">
    <property type="term" value="F:adenine binding"/>
    <property type="evidence" value="ECO:0007669"/>
    <property type="project" value="TreeGrafter"/>
</dbReference>
<dbReference type="GO" id="GO:0003999">
    <property type="term" value="F:adenine phosphoribosyltransferase activity"/>
    <property type="evidence" value="ECO:0007669"/>
    <property type="project" value="UniProtKB-UniRule"/>
</dbReference>
<dbReference type="GO" id="GO:0016208">
    <property type="term" value="F:AMP binding"/>
    <property type="evidence" value="ECO:0007669"/>
    <property type="project" value="TreeGrafter"/>
</dbReference>
<dbReference type="GO" id="GO:0006168">
    <property type="term" value="P:adenine salvage"/>
    <property type="evidence" value="ECO:0007669"/>
    <property type="project" value="InterPro"/>
</dbReference>
<dbReference type="GO" id="GO:0044209">
    <property type="term" value="P:AMP salvage"/>
    <property type="evidence" value="ECO:0007669"/>
    <property type="project" value="UniProtKB-UniRule"/>
</dbReference>
<dbReference type="GO" id="GO:0006166">
    <property type="term" value="P:purine ribonucleoside salvage"/>
    <property type="evidence" value="ECO:0007669"/>
    <property type="project" value="UniProtKB-KW"/>
</dbReference>
<dbReference type="CDD" id="cd06223">
    <property type="entry name" value="PRTases_typeI"/>
    <property type="match status" value="1"/>
</dbReference>
<dbReference type="FunFam" id="3.40.50.2020:FF:000004">
    <property type="entry name" value="Adenine phosphoribosyltransferase"/>
    <property type="match status" value="1"/>
</dbReference>
<dbReference type="Gene3D" id="3.40.50.2020">
    <property type="match status" value="1"/>
</dbReference>
<dbReference type="HAMAP" id="MF_00004">
    <property type="entry name" value="Aden_phosphoribosyltr"/>
    <property type="match status" value="1"/>
</dbReference>
<dbReference type="InterPro" id="IPR005764">
    <property type="entry name" value="Ade_phspho_trans"/>
</dbReference>
<dbReference type="InterPro" id="IPR000836">
    <property type="entry name" value="PRibTrfase_dom"/>
</dbReference>
<dbReference type="InterPro" id="IPR029057">
    <property type="entry name" value="PRTase-like"/>
</dbReference>
<dbReference type="InterPro" id="IPR050054">
    <property type="entry name" value="UPRTase/APRTase"/>
</dbReference>
<dbReference type="NCBIfam" id="TIGR01090">
    <property type="entry name" value="apt"/>
    <property type="match status" value="1"/>
</dbReference>
<dbReference type="NCBIfam" id="NF002633">
    <property type="entry name" value="PRK02304.1-2"/>
    <property type="match status" value="1"/>
</dbReference>
<dbReference type="NCBIfam" id="NF002634">
    <property type="entry name" value="PRK02304.1-3"/>
    <property type="match status" value="1"/>
</dbReference>
<dbReference type="NCBIfam" id="NF002636">
    <property type="entry name" value="PRK02304.1-5"/>
    <property type="match status" value="1"/>
</dbReference>
<dbReference type="PANTHER" id="PTHR32315">
    <property type="entry name" value="ADENINE PHOSPHORIBOSYLTRANSFERASE"/>
    <property type="match status" value="1"/>
</dbReference>
<dbReference type="PANTHER" id="PTHR32315:SF3">
    <property type="entry name" value="ADENINE PHOSPHORIBOSYLTRANSFERASE"/>
    <property type="match status" value="1"/>
</dbReference>
<dbReference type="Pfam" id="PF00156">
    <property type="entry name" value="Pribosyltran"/>
    <property type="match status" value="1"/>
</dbReference>
<dbReference type="SUPFAM" id="SSF53271">
    <property type="entry name" value="PRTase-like"/>
    <property type="match status" value="1"/>
</dbReference>